<proteinExistence type="inferred from homology"/>
<reference key="1">
    <citation type="journal article" date="2006" name="J. Bacteriol.">
        <title>Chromosome rearrangement and diversification of Francisella tularensis revealed by the type B (OSU18) genome sequence.</title>
        <authorList>
            <person name="Petrosino J.F."/>
            <person name="Xiang Q."/>
            <person name="Karpathy S.E."/>
            <person name="Jiang H."/>
            <person name="Yerrapragada S."/>
            <person name="Liu Y."/>
            <person name="Gioia J."/>
            <person name="Hemphill L."/>
            <person name="Gonzalez A."/>
            <person name="Raghavan T.M."/>
            <person name="Uzman A."/>
            <person name="Fox G.E."/>
            <person name="Highlander S."/>
            <person name="Reichard M."/>
            <person name="Morton R.J."/>
            <person name="Clinkenbeard K.D."/>
            <person name="Weinstock G.M."/>
        </authorList>
    </citation>
    <scope>NUCLEOTIDE SEQUENCE [LARGE SCALE GENOMIC DNA]</scope>
    <source>
        <strain>OSU18</strain>
    </source>
</reference>
<feature type="chain" id="PRO_1000054464" description="Large ribosomal subunit protein uL15">
    <location>
        <begin position="1"/>
        <end position="143"/>
    </location>
</feature>
<feature type="region of interest" description="Disordered" evidence="2">
    <location>
        <begin position="1"/>
        <end position="52"/>
    </location>
</feature>
<feature type="compositionally biased region" description="Gly residues" evidence="2">
    <location>
        <begin position="21"/>
        <end position="31"/>
    </location>
</feature>
<evidence type="ECO:0000255" key="1">
    <source>
        <dbReference type="HAMAP-Rule" id="MF_01341"/>
    </source>
</evidence>
<evidence type="ECO:0000256" key="2">
    <source>
        <dbReference type="SAM" id="MobiDB-lite"/>
    </source>
</evidence>
<evidence type="ECO:0000305" key="3"/>
<comment type="function">
    <text evidence="1">Binds to the 23S rRNA.</text>
</comment>
<comment type="subunit">
    <text evidence="1">Part of the 50S ribosomal subunit.</text>
</comment>
<comment type="similarity">
    <text evidence="1">Belongs to the universal ribosomal protein uL15 family.</text>
</comment>
<protein>
    <recommendedName>
        <fullName evidence="1">Large ribosomal subunit protein uL15</fullName>
    </recommendedName>
    <alternativeName>
        <fullName evidence="3">50S ribosomal protein L15</fullName>
    </alternativeName>
</protein>
<accession>Q0BNQ8</accession>
<keyword id="KW-0687">Ribonucleoprotein</keyword>
<keyword id="KW-0689">Ribosomal protein</keyword>
<keyword id="KW-0694">RNA-binding</keyword>
<keyword id="KW-0699">rRNA-binding</keyword>
<name>RL15_FRATO</name>
<sequence length="143" mass="15096">MKLNTLAPAAGSKSAPKRLGRGIGSGLGKTSGKGHKGQKARSGGYHKVGFEGGQMPLQRRLPKFGFPSASKRYVAEIRLHELNNVVADEVTLDTLKDFGLIRKDIKTVKVIASGEIQKAVSLKGIACTKGAKEAIEKAGGKVE</sequence>
<dbReference type="EMBL" id="CP000437">
    <property type="protein sequence ID" value="ABI82276.1"/>
    <property type="molecule type" value="Genomic_DNA"/>
</dbReference>
<dbReference type="RefSeq" id="WP_003014365.1">
    <property type="nucleotide sequence ID" value="NC_017463.1"/>
</dbReference>
<dbReference type="SMR" id="Q0BNQ8"/>
<dbReference type="KEGG" id="fth:FTH_0250"/>
<dbReference type="GO" id="GO:0022625">
    <property type="term" value="C:cytosolic large ribosomal subunit"/>
    <property type="evidence" value="ECO:0007669"/>
    <property type="project" value="TreeGrafter"/>
</dbReference>
<dbReference type="GO" id="GO:0019843">
    <property type="term" value="F:rRNA binding"/>
    <property type="evidence" value="ECO:0007669"/>
    <property type="project" value="UniProtKB-UniRule"/>
</dbReference>
<dbReference type="GO" id="GO:0003735">
    <property type="term" value="F:structural constituent of ribosome"/>
    <property type="evidence" value="ECO:0007669"/>
    <property type="project" value="InterPro"/>
</dbReference>
<dbReference type="GO" id="GO:0006412">
    <property type="term" value="P:translation"/>
    <property type="evidence" value="ECO:0007669"/>
    <property type="project" value="UniProtKB-UniRule"/>
</dbReference>
<dbReference type="Gene3D" id="3.100.10.10">
    <property type="match status" value="1"/>
</dbReference>
<dbReference type="HAMAP" id="MF_01341">
    <property type="entry name" value="Ribosomal_uL15"/>
    <property type="match status" value="1"/>
</dbReference>
<dbReference type="InterPro" id="IPR030878">
    <property type="entry name" value="Ribosomal_uL15"/>
</dbReference>
<dbReference type="InterPro" id="IPR021131">
    <property type="entry name" value="Ribosomal_uL15/eL18"/>
</dbReference>
<dbReference type="InterPro" id="IPR036227">
    <property type="entry name" value="Ribosomal_uL15/eL18_sf"/>
</dbReference>
<dbReference type="InterPro" id="IPR005749">
    <property type="entry name" value="Ribosomal_uL15_bac-type"/>
</dbReference>
<dbReference type="InterPro" id="IPR001196">
    <property type="entry name" value="Ribosomal_uL15_CS"/>
</dbReference>
<dbReference type="NCBIfam" id="TIGR01071">
    <property type="entry name" value="rplO_bact"/>
    <property type="match status" value="1"/>
</dbReference>
<dbReference type="PANTHER" id="PTHR12934">
    <property type="entry name" value="50S RIBOSOMAL PROTEIN L15"/>
    <property type="match status" value="1"/>
</dbReference>
<dbReference type="PANTHER" id="PTHR12934:SF11">
    <property type="entry name" value="LARGE RIBOSOMAL SUBUNIT PROTEIN UL15M"/>
    <property type="match status" value="1"/>
</dbReference>
<dbReference type="Pfam" id="PF00828">
    <property type="entry name" value="Ribosomal_L27A"/>
    <property type="match status" value="1"/>
</dbReference>
<dbReference type="SUPFAM" id="SSF52080">
    <property type="entry name" value="Ribosomal proteins L15p and L18e"/>
    <property type="match status" value="1"/>
</dbReference>
<dbReference type="PROSITE" id="PS00475">
    <property type="entry name" value="RIBOSOMAL_L15"/>
    <property type="match status" value="1"/>
</dbReference>
<gene>
    <name evidence="1" type="primary">rplO</name>
    <name type="ordered locus">FTH_0250</name>
</gene>
<organism>
    <name type="scientific">Francisella tularensis subsp. holarctica (strain OSU18)</name>
    <dbReference type="NCBI Taxonomy" id="393011"/>
    <lineage>
        <taxon>Bacteria</taxon>
        <taxon>Pseudomonadati</taxon>
        <taxon>Pseudomonadota</taxon>
        <taxon>Gammaproteobacteria</taxon>
        <taxon>Thiotrichales</taxon>
        <taxon>Francisellaceae</taxon>
        <taxon>Francisella</taxon>
    </lineage>
</organism>